<protein>
    <recommendedName>
        <fullName evidence="1">Peptide chain release factor 1</fullName>
        <shortName evidence="1">RF-1</shortName>
    </recommendedName>
</protein>
<organism>
    <name type="scientific">Yersinia pestis bv. Antiqua (strain Nepal516)</name>
    <dbReference type="NCBI Taxonomy" id="377628"/>
    <lineage>
        <taxon>Bacteria</taxon>
        <taxon>Pseudomonadati</taxon>
        <taxon>Pseudomonadota</taxon>
        <taxon>Gammaproteobacteria</taxon>
        <taxon>Enterobacterales</taxon>
        <taxon>Yersiniaceae</taxon>
        <taxon>Yersinia</taxon>
    </lineage>
</organism>
<gene>
    <name evidence="1" type="primary">prfA</name>
    <name type="ordered locus">YPN_1499</name>
    <name type="ORF">YP516_1659</name>
</gene>
<keyword id="KW-0963">Cytoplasm</keyword>
<keyword id="KW-0488">Methylation</keyword>
<keyword id="KW-0648">Protein biosynthesis</keyword>
<sequence>MKSSIVAKLEALQERHEEVLAYLGDASVIADQDRFRALSREYAQLTDVTRCFKEWRSAQDDIEAAEMMLDDLEMREMAQEELKIAKARSEELEQQLQVLLLPKDPDDERDCFLEIRAGTGGDEAAIFAGDMFRMYSRYAETRRWKVEIMSASEGEHGGYKEIIAKISGDGVFGQLKFESGGHRVQRVPETESQGRIHTSACTVAVMPAIPEAELPEINAGDLRIDTFRSSGAGGQHVNTTDSAIRITHIPTGIVVECQDERSQHKNKAKAMSVLGARIRAAEMQKRQLAEASERRNLLGTGDRSDRNRTYNFPQGRVTDHRINLTLYRLDEVMEGKLDMLIQPIVQEYQADQLSALSEQD</sequence>
<dbReference type="EMBL" id="CP000305">
    <property type="protein sequence ID" value="ABG17829.1"/>
    <property type="molecule type" value="Genomic_DNA"/>
</dbReference>
<dbReference type="EMBL" id="ACNQ01000009">
    <property type="protein sequence ID" value="EEO76931.1"/>
    <property type="molecule type" value="Genomic_DNA"/>
</dbReference>
<dbReference type="RefSeq" id="WP_002211236.1">
    <property type="nucleotide sequence ID" value="NZ_ACNQ01000009.1"/>
</dbReference>
<dbReference type="SMR" id="Q1CJK1"/>
<dbReference type="GeneID" id="57976644"/>
<dbReference type="KEGG" id="ypn:YPN_1499"/>
<dbReference type="HOGENOM" id="CLU_036856_0_1_6"/>
<dbReference type="Proteomes" id="UP000008936">
    <property type="component" value="Chromosome"/>
</dbReference>
<dbReference type="GO" id="GO:0005737">
    <property type="term" value="C:cytoplasm"/>
    <property type="evidence" value="ECO:0007669"/>
    <property type="project" value="UniProtKB-SubCell"/>
</dbReference>
<dbReference type="GO" id="GO:0016149">
    <property type="term" value="F:translation release factor activity, codon specific"/>
    <property type="evidence" value="ECO:0007669"/>
    <property type="project" value="UniProtKB-UniRule"/>
</dbReference>
<dbReference type="FunFam" id="3.30.160.20:FF:000004">
    <property type="entry name" value="Peptide chain release factor 1"/>
    <property type="match status" value="1"/>
</dbReference>
<dbReference type="FunFam" id="3.30.70.1660:FF:000002">
    <property type="entry name" value="Peptide chain release factor 1"/>
    <property type="match status" value="1"/>
</dbReference>
<dbReference type="FunFam" id="3.30.70.1660:FF:000004">
    <property type="entry name" value="Peptide chain release factor 1"/>
    <property type="match status" value="1"/>
</dbReference>
<dbReference type="Gene3D" id="3.30.160.20">
    <property type="match status" value="1"/>
</dbReference>
<dbReference type="Gene3D" id="3.30.70.1660">
    <property type="match status" value="1"/>
</dbReference>
<dbReference type="Gene3D" id="6.10.140.1950">
    <property type="match status" value="1"/>
</dbReference>
<dbReference type="HAMAP" id="MF_00093">
    <property type="entry name" value="Rel_fac_1"/>
    <property type="match status" value="1"/>
</dbReference>
<dbReference type="InterPro" id="IPR005139">
    <property type="entry name" value="PCRF"/>
</dbReference>
<dbReference type="InterPro" id="IPR000352">
    <property type="entry name" value="Pep_chain_release_fac_I"/>
</dbReference>
<dbReference type="InterPro" id="IPR045853">
    <property type="entry name" value="Pep_chain_release_fac_I_sf"/>
</dbReference>
<dbReference type="InterPro" id="IPR050057">
    <property type="entry name" value="Prokaryotic/Mito_RF"/>
</dbReference>
<dbReference type="InterPro" id="IPR004373">
    <property type="entry name" value="RF-1"/>
</dbReference>
<dbReference type="NCBIfam" id="TIGR00019">
    <property type="entry name" value="prfA"/>
    <property type="match status" value="1"/>
</dbReference>
<dbReference type="NCBIfam" id="NF001859">
    <property type="entry name" value="PRK00591.1"/>
    <property type="match status" value="1"/>
</dbReference>
<dbReference type="PANTHER" id="PTHR43804">
    <property type="entry name" value="LD18447P"/>
    <property type="match status" value="1"/>
</dbReference>
<dbReference type="PANTHER" id="PTHR43804:SF7">
    <property type="entry name" value="LD18447P"/>
    <property type="match status" value="1"/>
</dbReference>
<dbReference type="Pfam" id="PF03462">
    <property type="entry name" value="PCRF"/>
    <property type="match status" value="1"/>
</dbReference>
<dbReference type="Pfam" id="PF00472">
    <property type="entry name" value="RF-1"/>
    <property type="match status" value="1"/>
</dbReference>
<dbReference type="SMART" id="SM00937">
    <property type="entry name" value="PCRF"/>
    <property type="match status" value="1"/>
</dbReference>
<dbReference type="SUPFAM" id="SSF75620">
    <property type="entry name" value="Release factor"/>
    <property type="match status" value="1"/>
</dbReference>
<dbReference type="PROSITE" id="PS00745">
    <property type="entry name" value="RF_PROK_I"/>
    <property type="match status" value="1"/>
</dbReference>
<accession>Q1CJK1</accession>
<accession>C4GSC1</accession>
<proteinExistence type="inferred from homology"/>
<evidence type="ECO:0000255" key="1">
    <source>
        <dbReference type="HAMAP-Rule" id="MF_00093"/>
    </source>
</evidence>
<evidence type="ECO:0000256" key="2">
    <source>
        <dbReference type="SAM" id="MobiDB-lite"/>
    </source>
</evidence>
<name>RF1_YERPN</name>
<feature type="chain" id="PRO_0000263396" description="Peptide chain release factor 1">
    <location>
        <begin position="1"/>
        <end position="360"/>
    </location>
</feature>
<feature type="region of interest" description="Disordered" evidence="2">
    <location>
        <begin position="291"/>
        <end position="312"/>
    </location>
</feature>
<feature type="compositionally biased region" description="Basic and acidic residues" evidence="2">
    <location>
        <begin position="291"/>
        <end position="308"/>
    </location>
</feature>
<feature type="modified residue" description="N5-methylglutamine" evidence="1">
    <location>
        <position position="235"/>
    </location>
</feature>
<comment type="function">
    <text evidence="1">Peptide chain release factor 1 directs the termination of translation in response to the peptide chain termination codons UAG and UAA.</text>
</comment>
<comment type="subcellular location">
    <subcellularLocation>
        <location evidence="1">Cytoplasm</location>
    </subcellularLocation>
</comment>
<comment type="PTM">
    <text evidence="1">Methylated by PrmC. Methylation increases the termination efficiency of RF1.</text>
</comment>
<comment type="similarity">
    <text evidence="1">Belongs to the prokaryotic/mitochondrial release factor family.</text>
</comment>
<reference key="1">
    <citation type="journal article" date="2006" name="J. Bacteriol.">
        <title>Complete genome sequence of Yersinia pestis strains Antiqua and Nepal516: evidence of gene reduction in an emerging pathogen.</title>
        <authorList>
            <person name="Chain P.S.G."/>
            <person name="Hu P."/>
            <person name="Malfatti S.A."/>
            <person name="Radnedge L."/>
            <person name="Larimer F."/>
            <person name="Vergez L.M."/>
            <person name="Worsham P."/>
            <person name="Chu M.C."/>
            <person name="Andersen G.L."/>
        </authorList>
    </citation>
    <scope>NUCLEOTIDE SEQUENCE [LARGE SCALE GENOMIC DNA]</scope>
    <source>
        <strain>Nepal516</strain>
    </source>
</reference>
<reference key="2">
    <citation type="submission" date="2009-04" db="EMBL/GenBank/DDBJ databases">
        <title>Yersinia pestis Nepal516A whole genome shotgun sequencing project.</title>
        <authorList>
            <person name="Plunkett G. III"/>
            <person name="Anderson B.D."/>
            <person name="Baumler D.J."/>
            <person name="Burland V."/>
            <person name="Cabot E.L."/>
            <person name="Glasner J.D."/>
            <person name="Mau B."/>
            <person name="Neeno-Eckwall E."/>
            <person name="Perna N.T."/>
            <person name="Munk A.C."/>
            <person name="Tapia R."/>
            <person name="Green L.D."/>
            <person name="Rogers Y.C."/>
            <person name="Detter J.C."/>
            <person name="Bruce D.C."/>
            <person name="Brettin T.S."/>
        </authorList>
    </citation>
    <scope>NUCLEOTIDE SEQUENCE [LARGE SCALE GENOMIC DNA]</scope>
    <source>
        <strain>Nepal516</strain>
    </source>
</reference>